<dbReference type="EC" id="3.5.1.2" evidence="1"/>
<dbReference type="EMBL" id="CP000628">
    <property type="protein sequence ID" value="ACM26754.1"/>
    <property type="molecule type" value="Genomic_DNA"/>
</dbReference>
<dbReference type="RefSeq" id="WP_007696344.1">
    <property type="nucleotide sequence ID" value="NC_011985.1"/>
</dbReference>
<dbReference type="SMR" id="B9JFR4"/>
<dbReference type="STRING" id="311403.Arad_2601"/>
<dbReference type="KEGG" id="ara:Arad_2601"/>
<dbReference type="eggNOG" id="COG2066">
    <property type="taxonomic scope" value="Bacteria"/>
</dbReference>
<dbReference type="HOGENOM" id="CLU_027932_1_1_5"/>
<dbReference type="Proteomes" id="UP000001600">
    <property type="component" value="Chromosome 1"/>
</dbReference>
<dbReference type="GO" id="GO:0004359">
    <property type="term" value="F:glutaminase activity"/>
    <property type="evidence" value="ECO:0007669"/>
    <property type="project" value="UniProtKB-UniRule"/>
</dbReference>
<dbReference type="GO" id="GO:0006537">
    <property type="term" value="P:glutamate biosynthetic process"/>
    <property type="evidence" value="ECO:0007669"/>
    <property type="project" value="TreeGrafter"/>
</dbReference>
<dbReference type="GO" id="GO:0006543">
    <property type="term" value="P:glutamine catabolic process"/>
    <property type="evidence" value="ECO:0007669"/>
    <property type="project" value="TreeGrafter"/>
</dbReference>
<dbReference type="FunFam" id="3.40.710.10:FF:000005">
    <property type="entry name" value="Glutaminase"/>
    <property type="match status" value="1"/>
</dbReference>
<dbReference type="Gene3D" id="3.40.710.10">
    <property type="entry name" value="DD-peptidase/beta-lactamase superfamily"/>
    <property type="match status" value="1"/>
</dbReference>
<dbReference type="HAMAP" id="MF_00313">
    <property type="entry name" value="Glutaminase"/>
    <property type="match status" value="1"/>
</dbReference>
<dbReference type="InterPro" id="IPR012338">
    <property type="entry name" value="Beta-lactam/transpept-like"/>
</dbReference>
<dbReference type="InterPro" id="IPR015868">
    <property type="entry name" value="Glutaminase"/>
</dbReference>
<dbReference type="NCBIfam" id="TIGR03814">
    <property type="entry name" value="Gln_ase"/>
    <property type="match status" value="1"/>
</dbReference>
<dbReference type="NCBIfam" id="NF002132">
    <property type="entry name" value="PRK00971.1-1"/>
    <property type="match status" value="1"/>
</dbReference>
<dbReference type="NCBIfam" id="NF002133">
    <property type="entry name" value="PRK00971.1-2"/>
    <property type="match status" value="1"/>
</dbReference>
<dbReference type="PANTHER" id="PTHR12544">
    <property type="entry name" value="GLUTAMINASE"/>
    <property type="match status" value="1"/>
</dbReference>
<dbReference type="PANTHER" id="PTHR12544:SF29">
    <property type="entry name" value="GLUTAMINASE"/>
    <property type="match status" value="1"/>
</dbReference>
<dbReference type="Pfam" id="PF04960">
    <property type="entry name" value="Glutaminase"/>
    <property type="match status" value="1"/>
</dbReference>
<dbReference type="SUPFAM" id="SSF56601">
    <property type="entry name" value="beta-lactamase/transpeptidase-like"/>
    <property type="match status" value="1"/>
</dbReference>
<gene>
    <name evidence="1" type="primary">glsA</name>
    <name type="ordered locus">Arad_2601</name>
</gene>
<reference key="1">
    <citation type="journal article" date="2009" name="J. Bacteriol.">
        <title>Genome sequences of three Agrobacterium biovars help elucidate the evolution of multichromosome genomes in bacteria.</title>
        <authorList>
            <person name="Slater S.C."/>
            <person name="Goldman B.S."/>
            <person name="Goodner B."/>
            <person name="Setubal J.C."/>
            <person name="Farrand S.K."/>
            <person name="Nester E.W."/>
            <person name="Burr T.J."/>
            <person name="Banta L."/>
            <person name="Dickerman A.W."/>
            <person name="Paulsen I."/>
            <person name="Otten L."/>
            <person name="Suen G."/>
            <person name="Welch R."/>
            <person name="Almeida N.F."/>
            <person name="Arnold F."/>
            <person name="Burton O.T."/>
            <person name="Du Z."/>
            <person name="Ewing A."/>
            <person name="Godsy E."/>
            <person name="Heisel S."/>
            <person name="Houmiel K.L."/>
            <person name="Jhaveri J."/>
            <person name="Lu J."/>
            <person name="Miller N.M."/>
            <person name="Norton S."/>
            <person name="Chen Q."/>
            <person name="Phoolcharoen W."/>
            <person name="Ohlin V."/>
            <person name="Ondrusek D."/>
            <person name="Pride N."/>
            <person name="Stricklin S.L."/>
            <person name="Sun J."/>
            <person name="Wheeler C."/>
            <person name="Wilson L."/>
            <person name="Zhu H."/>
            <person name="Wood D.W."/>
        </authorList>
    </citation>
    <scope>NUCLEOTIDE SEQUENCE [LARGE SCALE GENOMIC DNA]</scope>
    <source>
        <strain>K84 / ATCC BAA-868</strain>
    </source>
</reference>
<feature type="chain" id="PRO_1000132901" description="Glutaminase">
    <location>
        <begin position="1"/>
        <end position="309"/>
    </location>
</feature>
<feature type="binding site" evidence="1">
    <location>
        <position position="64"/>
    </location>
    <ligand>
        <name>substrate</name>
    </ligand>
</feature>
<feature type="binding site" evidence="1">
    <location>
        <position position="114"/>
    </location>
    <ligand>
        <name>substrate</name>
    </ligand>
</feature>
<feature type="binding site" evidence="1">
    <location>
        <position position="160"/>
    </location>
    <ligand>
        <name>substrate</name>
    </ligand>
</feature>
<feature type="binding site" evidence="1">
    <location>
        <position position="167"/>
    </location>
    <ligand>
        <name>substrate</name>
    </ligand>
</feature>
<feature type="binding site" evidence="1">
    <location>
        <position position="191"/>
    </location>
    <ligand>
        <name>substrate</name>
    </ligand>
</feature>
<feature type="binding site" evidence="1">
    <location>
        <position position="243"/>
    </location>
    <ligand>
        <name>substrate</name>
    </ligand>
</feature>
<feature type="binding site" evidence="1">
    <location>
        <position position="261"/>
    </location>
    <ligand>
        <name>substrate</name>
    </ligand>
</feature>
<name>GLSA_RHIR8</name>
<keyword id="KW-0378">Hydrolase</keyword>
<proteinExistence type="inferred from homology"/>
<comment type="catalytic activity">
    <reaction evidence="1">
        <text>L-glutamine + H2O = L-glutamate + NH4(+)</text>
        <dbReference type="Rhea" id="RHEA:15889"/>
        <dbReference type="ChEBI" id="CHEBI:15377"/>
        <dbReference type="ChEBI" id="CHEBI:28938"/>
        <dbReference type="ChEBI" id="CHEBI:29985"/>
        <dbReference type="ChEBI" id="CHEBI:58359"/>
        <dbReference type="EC" id="3.5.1.2"/>
    </reaction>
</comment>
<comment type="subunit">
    <text evidence="1">Homotetramer.</text>
</comment>
<comment type="similarity">
    <text evidence="1">Belongs to the glutaminase family.</text>
</comment>
<organism>
    <name type="scientific">Rhizobium rhizogenes (strain K84 / ATCC BAA-868)</name>
    <name type="common">Agrobacterium radiobacter</name>
    <dbReference type="NCBI Taxonomy" id="311403"/>
    <lineage>
        <taxon>Bacteria</taxon>
        <taxon>Pseudomonadati</taxon>
        <taxon>Pseudomonadota</taxon>
        <taxon>Alphaproteobacteria</taxon>
        <taxon>Hyphomicrobiales</taxon>
        <taxon>Rhizobiaceae</taxon>
        <taxon>Rhizobium/Agrobacterium group</taxon>
        <taxon>Rhizobium</taxon>
    </lineage>
</organism>
<protein>
    <recommendedName>
        <fullName evidence="1">Glutaminase</fullName>
        <ecNumber evidence="1">3.5.1.2</ecNumber>
    </recommendedName>
</protein>
<evidence type="ECO:0000255" key="1">
    <source>
        <dbReference type="HAMAP-Rule" id="MF_00313"/>
    </source>
</evidence>
<sequence length="309" mass="32718">MADLQAVLDSIHAELSPRLGEGKVADYIPELAKVDPNQFGMAIATVDGNIHSVGHADVPFSIQSISKVFMLTLALGKVGESLWNRVGREPSGTAFNSIVQLEREEGIPRNPFVNAGAIAVSDVVLSGHAPREAIGELLRFVRYVADDESITIDDKVARSETQTGFRNFALANFMRAYGNIDHPVEHVLGVYFHQCAVSMSCQQLAKAGLYLAARGTNPITGHSVVSPKRARRINALMLTCGHYDGSGDFAYHVGLPGKSGVGGGILAVAPGIGSIAVWSPGLNKVGNSQLGAVALEMLAARTGWSVFGD</sequence>
<accession>B9JFR4</accession>